<sequence>MRVLGVDPGLTRCGFGVVDGGGGRTVTPIAVDVVRTPADLELSSRLLRISEAAESWIDLHRPEVVAIERVFSQHNVRTAMGTAQAGGVVALAAARRGIPVCFHTPSEVKAAVTGSGSADKAQVTAMVTRILKLAAAPKPADAADALALAICHCWRAPMIERMARAEAAAAEQKRRYQARLAEVKKAGTR</sequence>
<dbReference type="EC" id="3.1.21.10" evidence="1"/>
<dbReference type="EMBL" id="CP000431">
    <property type="protein sequence ID" value="ABG98658.1"/>
    <property type="molecule type" value="Genomic_DNA"/>
</dbReference>
<dbReference type="RefSeq" id="WP_011598636.1">
    <property type="nucleotide sequence ID" value="NC_008268.1"/>
</dbReference>
<dbReference type="SMR" id="Q0S1C8"/>
<dbReference type="KEGG" id="rha:RHA1_ro06892"/>
<dbReference type="PATRIC" id="fig|101510.16.peg.6951"/>
<dbReference type="eggNOG" id="COG0817">
    <property type="taxonomic scope" value="Bacteria"/>
</dbReference>
<dbReference type="HOGENOM" id="CLU_091257_0_2_11"/>
<dbReference type="OrthoDB" id="9805499at2"/>
<dbReference type="Proteomes" id="UP000008710">
    <property type="component" value="Chromosome"/>
</dbReference>
<dbReference type="GO" id="GO:0005737">
    <property type="term" value="C:cytoplasm"/>
    <property type="evidence" value="ECO:0007669"/>
    <property type="project" value="UniProtKB-SubCell"/>
</dbReference>
<dbReference type="GO" id="GO:0048476">
    <property type="term" value="C:Holliday junction resolvase complex"/>
    <property type="evidence" value="ECO:0007669"/>
    <property type="project" value="UniProtKB-UniRule"/>
</dbReference>
<dbReference type="GO" id="GO:0008821">
    <property type="term" value="F:crossover junction DNA endonuclease activity"/>
    <property type="evidence" value="ECO:0007669"/>
    <property type="project" value="UniProtKB-UniRule"/>
</dbReference>
<dbReference type="GO" id="GO:0003677">
    <property type="term" value="F:DNA binding"/>
    <property type="evidence" value="ECO:0007669"/>
    <property type="project" value="UniProtKB-KW"/>
</dbReference>
<dbReference type="GO" id="GO:0000287">
    <property type="term" value="F:magnesium ion binding"/>
    <property type="evidence" value="ECO:0007669"/>
    <property type="project" value="UniProtKB-UniRule"/>
</dbReference>
<dbReference type="GO" id="GO:0006310">
    <property type="term" value="P:DNA recombination"/>
    <property type="evidence" value="ECO:0007669"/>
    <property type="project" value="UniProtKB-UniRule"/>
</dbReference>
<dbReference type="GO" id="GO:0006281">
    <property type="term" value="P:DNA repair"/>
    <property type="evidence" value="ECO:0007669"/>
    <property type="project" value="UniProtKB-UniRule"/>
</dbReference>
<dbReference type="FunFam" id="3.30.420.10:FF:000002">
    <property type="entry name" value="Crossover junction endodeoxyribonuclease RuvC"/>
    <property type="match status" value="1"/>
</dbReference>
<dbReference type="Gene3D" id="3.30.420.10">
    <property type="entry name" value="Ribonuclease H-like superfamily/Ribonuclease H"/>
    <property type="match status" value="1"/>
</dbReference>
<dbReference type="HAMAP" id="MF_00034">
    <property type="entry name" value="RuvC"/>
    <property type="match status" value="1"/>
</dbReference>
<dbReference type="InterPro" id="IPR012337">
    <property type="entry name" value="RNaseH-like_sf"/>
</dbReference>
<dbReference type="InterPro" id="IPR036397">
    <property type="entry name" value="RNaseH_sf"/>
</dbReference>
<dbReference type="InterPro" id="IPR020563">
    <property type="entry name" value="X-over_junc_endoDNase_Mg_BS"/>
</dbReference>
<dbReference type="InterPro" id="IPR002176">
    <property type="entry name" value="X-over_junc_endoDNase_RuvC"/>
</dbReference>
<dbReference type="NCBIfam" id="NF000711">
    <property type="entry name" value="PRK00039.2-1"/>
    <property type="match status" value="1"/>
</dbReference>
<dbReference type="NCBIfam" id="TIGR00228">
    <property type="entry name" value="ruvC"/>
    <property type="match status" value="1"/>
</dbReference>
<dbReference type="PANTHER" id="PTHR30194">
    <property type="entry name" value="CROSSOVER JUNCTION ENDODEOXYRIBONUCLEASE RUVC"/>
    <property type="match status" value="1"/>
</dbReference>
<dbReference type="PANTHER" id="PTHR30194:SF3">
    <property type="entry name" value="CROSSOVER JUNCTION ENDODEOXYRIBONUCLEASE RUVC"/>
    <property type="match status" value="1"/>
</dbReference>
<dbReference type="Pfam" id="PF02075">
    <property type="entry name" value="RuvC"/>
    <property type="match status" value="1"/>
</dbReference>
<dbReference type="PRINTS" id="PR00696">
    <property type="entry name" value="RSOLVASERUVC"/>
</dbReference>
<dbReference type="SUPFAM" id="SSF53098">
    <property type="entry name" value="Ribonuclease H-like"/>
    <property type="match status" value="1"/>
</dbReference>
<dbReference type="PROSITE" id="PS01321">
    <property type="entry name" value="RUVC"/>
    <property type="match status" value="1"/>
</dbReference>
<protein>
    <recommendedName>
        <fullName evidence="1">Crossover junction endodeoxyribonuclease RuvC</fullName>
        <ecNumber evidence="1">3.1.21.10</ecNumber>
    </recommendedName>
    <alternativeName>
        <fullName evidence="1">Holliday junction nuclease RuvC</fullName>
    </alternativeName>
    <alternativeName>
        <fullName evidence="1">Holliday junction resolvase RuvC</fullName>
    </alternativeName>
</protein>
<accession>Q0S1C8</accession>
<keyword id="KW-0963">Cytoplasm</keyword>
<keyword id="KW-0227">DNA damage</keyword>
<keyword id="KW-0233">DNA recombination</keyword>
<keyword id="KW-0234">DNA repair</keyword>
<keyword id="KW-0238">DNA-binding</keyword>
<keyword id="KW-0255">Endonuclease</keyword>
<keyword id="KW-0378">Hydrolase</keyword>
<keyword id="KW-0460">Magnesium</keyword>
<keyword id="KW-0479">Metal-binding</keyword>
<keyword id="KW-0540">Nuclease</keyword>
<organism>
    <name type="scientific">Rhodococcus jostii (strain RHA1)</name>
    <dbReference type="NCBI Taxonomy" id="101510"/>
    <lineage>
        <taxon>Bacteria</taxon>
        <taxon>Bacillati</taxon>
        <taxon>Actinomycetota</taxon>
        <taxon>Actinomycetes</taxon>
        <taxon>Mycobacteriales</taxon>
        <taxon>Nocardiaceae</taxon>
        <taxon>Rhodococcus</taxon>
    </lineage>
</organism>
<proteinExistence type="inferred from homology"/>
<feature type="chain" id="PRO_1000002817" description="Crossover junction endodeoxyribonuclease RuvC">
    <location>
        <begin position="1"/>
        <end position="189"/>
    </location>
</feature>
<feature type="active site" evidence="1">
    <location>
        <position position="7"/>
    </location>
</feature>
<feature type="active site" evidence="1">
    <location>
        <position position="68"/>
    </location>
</feature>
<feature type="active site" evidence="1">
    <location>
        <position position="141"/>
    </location>
</feature>
<feature type="binding site" evidence="1">
    <location>
        <position position="7"/>
    </location>
    <ligand>
        <name>Mg(2+)</name>
        <dbReference type="ChEBI" id="CHEBI:18420"/>
        <label>1</label>
    </ligand>
</feature>
<feature type="binding site" evidence="1">
    <location>
        <position position="68"/>
    </location>
    <ligand>
        <name>Mg(2+)</name>
        <dbReference type="ChEBI" id="CHEBI:18420"/>
        <label>2</label>
    </ligand>
</feature>
<feature type="binding site" evidence="1">
    <location>
        <position position="141"/>
    </location>
    <ligand>
        <name>Mg(2+)</name>
        <dbReference type="ChEBI" id="CHEBI:18420"/>
        <label>1</label>
    </ligand>
</feature>
<gene>
    <name evidence="1" type="primary">ruvC</name>
    <name type="ordered locus">RHA1_ro06892</name>
</gene>
<evidence type="ECO:0000255" key="1">
    <source>
        <dbReference type="HAMAP-Rule" id="MF_00034"/>
    </source>
</evidence>
<comment type="function">
    <text evidence="1">The RuvA-RuvB-RuvC complex processes Holliday junction (HJ) DNA during genetic recombination and DNA repair. Endonuclease that resolves HJ intermediates. Cleaves cruciform DNA by making single-stranded nicks across the HJ at symmetrical positions within the homologous arms, yielding a 5'-phosphate and a 3'-hydroxyl group; requires a central core of homology in the junction. The consensus cleavage sequence is 5'-(A/T)TT(C/G)-3'. Cleavage occurs on the 3'-side of the TT dinucleotide at the point of strand exchange. HJ branch migration catalyzed by RuvA-RuvB allows RuvC to scan DNA until it finds its consensus sequence, where it cleaves and resolves the cruciform DNA.</text>
</comment>
<comment type="catalytic activity">
    <reaction evidence="1">
        <text>Endonucleolytic cleavage at a junction such as a reciprocal single-stranded crossover between two homologous DNA duplexes (Holliday junction).</text>
        <dbReference type="EC" id="3.1.21.10"/>
    </reaction>
</comment>
<comment type="cofactor">
    <cofactor evidence="1">
        <name>Mg(2+)</name>
        <dbReference type="ChEBI" id="CHEBI:18420"/>
    </cofactor>
    <text evidence="1">Binds 2 Mg(2+) ion per subunit.</text>
</comment>
<comment type="subunit">
    <text evidence="1">Homodimer which binds Holliday junction (HJ) DNA. The HJ becomes 2-fold symmetrical on binding to RuvC with unstacked arms; it has a different conformation from HJ DNA in complex with RuvA. In the full resolvosome a probable DNA-RuvA(4)-RuvB(12)-RuvC(2) complex forms which resolves the HJ.</text>
</comment>
<comment type="subcellular location">
    <subcellularLocation>
        <location evidence="1">Cytoplasm</location>
    </subcellularLocation>
</comment>
<comment type="similarity">
    <text evidence="1">Belongs to the RuvC family.</text>
</comment>
<name>RUVC_RHOJR</name>
<reference key="1">
    <citation type="journal article" date="2006" name="Proc. Natl. Acad. Sci. U.S.A.">
        <title>The complete genome of Rhodococcus sp. RHA1 provides insights into a catabolic powerhouse.</title>
        <authorList>
            <person name="McLeod M.P."/>
            <person name="Warren R.L."/>
            <person name="Hsiao W.W.L."/>
            <person name="Araki N."/>
            <person name="Myhre M."/>
            <person name="Fernandes C."/>
            <person name="Miyazawa D."/>
            <person name="Wong W."/>
            <person name="Lillquist A.L."/>
            <person name="Wang D."/>
            <person name="Dosanjh M."/>
            <person name="Hara H."/>
            <person name="Petrescu A."/>
            <person name="Morin R.D."/>
            <person name="Yang G."/>
            <person name="Stott J.M."/>
            <person name="Schein J.E."/>
            <person name="Shin H."/>
            <person name="Smailus D."/>
            <person name="Siddiqui A.S."/>
            <person name="Marra M.A."/>
            <person name="Jones S.J.M."/>
            <person name="Holt R."/>
            <person name="Brinkman F.S.L."/>
            <person name="Miyauchi K."/>
            <person name="Fukuda M."/>
            <person name="Davies J.E."/>
            <person name="Mohn W.W."/>
            <person name="Eltis L.D."/>
        </authorList>
    </citation>
    <scope>NUCLEOTIDE SEQUENCE [LARGE SCALE GENOMIC DNA]</scope>
    <source>
        <strain>RHA1</strain>
    </source>
</reference>